<accession>A6LNR9</accession>
<evidence type="ECO:0000255" key="1">
    <source>
        <dbReference type="HAMAP-Rule" id="MF_01518"/>
    </source>
</evidence>
<gene>
    <name evidence="1" type="primary">ade</name>
    <name type="ordered locus">Tmel_1731</name>
</gene>
<sequence length="574" mass="63652">MKIKEIIPVALGEKTPDLLIKNVKLLNVYTGNIEKTNIAILKKRIAGIGNEYNVGKEIFNAKNLYAIPGLIDAHVHIESSMLSPIEFAKMILPNGTTTIIADPHEIANVLGVEGINYMIKATEGIPLNVYFAIPSAVPATFLETSGAILGAEDMVSLLEKYPFRLIALGEVMNYPGVLNCDRELITKIEILRHKYKKIDGHAPGLSGKQLNAYIDAFVRSDHECETKSEALEKLSKGMHIFIREGTAARNLRSLIPAVNILNHFFFSFCTDDRDPEDIYKRGHINQIVKEAIGQGLDPVIAIRMATINTAKYFNLRSMGAISPGYKSDIVLVDNLYDFNILYVIKDSKFVVKDGKIDLKIESVFKDVPTTIGKINITKNYSLKVKNRNKKIRIISIKKFSLITEESIVSPKVSKNEIISDVENDIVKIAVFDRHNASGFSIGFVKGTGIKNGAIATTIGHDSHNLAVLGTNDKDMELAIKRILEINGGIVVIKDKKVISELSLPIAGLMSDETYNTVIKKLQHLKKSIEKLGTKNDVLMNIHFLQLAVIPKLKITDKGLIDVENQKIVDLFVEV</sequence>
<organism>
    <name type="scientific">Thermosipho melanesiensis (strain DSM 12029 / CIP 104789 / BI429)</name>
    <dbReference type="NCBI Taxonomy" id="391009"/>
    <lineage>
        <taxon>Bacteria</taxon>
        <taxon>Thermotogati</taxon>
        <taxon>Thermotogota</taxon>
        <taxon>Thermotogae</taxon>
        <taxon>Thermotogales</taxon>
        <taxon>Fervidobacteriaceae</taxon>
        <taxon>Thermosipho</taxon>
    </lineage>
</organism>
<comment type="catalytic activity">
    <reaction evidence="1">
        <text>adenine + H2O + H(+) = hypoxanthine + NH4(+)</text>
        <dbReference type="Rhea" id="RHEA:23688"/>
        <dbReference type="ChEBI" id="CHEBI:15377"/>
        <dbReference type="ChEBI" id="CHEBI:15378"/>
        <dbReference type="ChEBI" id="CHEBI:16708"/>
        <dbReference type="ChEBI" id="CHEBI:17368"/>
        <dbReference type="ChEBI" id="CHEBI:28938"/>
        <dbReference type="EC" id="3.5.4.2"/>
    </reaction>
</comment>
<comment type="cofactor">
    <cofactor evidence="1">
        <name>Mn(2+)</name>
        <dbReference type="ChEBI" id="CHEBI:29035"/>
    </cofactor>
</comment>
<comment type="similarity">
    <text evidence="1">Belongs to the metallo-dependent hydrolases superfamily. Adenine deaminase family.</text>
</comment>
<name>ADEC_THEM4</name>
<keyword id="KW-0378">Hydrolase</keyword>
<keyword id="KW-0464">Manganese</keyword>
<feature type="chain" id="PRO_1000068614" description="Adenine deaminase">
    <location>
        <begin position="1"/>
        <end position="574"/>
    </location>
</feature>
<proteinExistence type="inferred from homology"/>
<protein>
    <recommendedName>
        <fullName evidence="1">Adenine deaminase</fullName>
        <shortName evidence="1">Adenase</shortName>
        <shortName evidence="1">Adenine aminase</shortName>
        <ecNumber evidence="1">3.5.4.2</ecNumber>
    </recommendedName>
</protein>
<reference key="1">
    <citation type="submission" date="2007-05" db="EMBL/GenBank/DDBJ databases">
        <title>Complete sequence of Thermosipho melanesiensis BI429.</title>
        <authorList>
            <consortium name="US DOE Joint Genome Institute"/>
            <person name="Copeland A."/>
            <person name="Lucas S."/>
            <person name="Lapidus A."/>
            <person name="Barry K."/>
            <person name="Glavina del Rio T."/>
            <person name="Dalin E."/>
            <person name="Tice H."/>
            <person name="Pitluck S."/>
            <person name="Chertkov O."/>
            <person name="Brettin T."/>
            <person name="Bruce D."/>
            <person name="Detter J.C."/>
            <person name="Han C."/>
            <person name="Schmutz J."/>
            <person name="Larimer F."/>
            <person name="Land M."/>
            <person name="Hauser L."/>
            <person name="Kyrpides N."/>
            <person name="Mikhailova N."/>
            <person name="Nelson K."/>
            <person name="Gogarten J.P."/>
            <person name="Noll K."/>
            <person name="Richardson P."/>
        </authorList>
    </citation>
    <scope>NUCLEOTIDE SEQUENCE [LARGE SCALE GENOMIC DNA]</scope>
    <source>
        <strain>DSM 12029 / CIP 104789 / BI429</strain>
    </source>
</reference>
<dbReference type="EC" id="3.5.4.2" evidence="1"/>
<dbReference type="EMBL" id="CP000716">
    <property type="protein sequence ID" value="ABR31570.1"/>
    <property type="molecule type" value="Genomic_DNA"/>
</dbReference>
<dbReference type="RefSeq" id="WP_012057929.1">
    <property type="nucleotide sequence ID" value="NC_009616.1"/>
</dbReference>
<dbReference type="SMR" id="A6LNR9"/>
<dbReference type="STRING" id="391009.Tmel_1731"/>
<dbReference type="KEGG" id="tme:Tmel_1731"/>
<dbReference type="eggNOG" id="COG1001">
    <property type="taxonomic scope" value="Bacteria"/>
</dbReference>
<dbReference type="HOGENOM" id="CLU_027935_0_0_0"/>
<dbReference type="OrthoDB" id="9775607at2"/>
<dbReference type="Proteomes" id="UP000001110">
    <property type="component" value="Chromosome"/>
</dbReference>
<dbReference type="GO" id="GO:0000034">
    <property type="term" value="F:adenine deaminase activity"/>
    <property type="evidence" value="ECO:0007669"/>
    <property type="project" value="UniProtKB-UniRule"/>
</dbReference>
<dbReference type="GO" id="GO:0006146">
    <property type="term" value="P:adenine catabolic process"/>
    <property type="evidence" value="ECO:0007669"/>
    <property type="project" value="InterPro"/>
</dbReference>
<dbReference type="CDD" id="cd01295">
    <property type="entry name" value="AdeC"/>
    <property type="match status" value="1"/>
</dbReference>
<dbReference type="Gene3D" id="3.20.20.140">
    <property type="entry name" value="Metal-dependent hydrolases"/>
    <property type="match status" value="1"/>
</dbReference>
<dbReference type="Gene3D" id="2.30.40.10">
    <property type="entry name" value="Urease, subunit C, domain 1"/>
    <property type="match status" value="1"/>
</dbReference>
<dbReference type="HAMAP" id="MF_01518">
    <property type="entry name" value="Adenine_deamin"/>
    <property type="match status" value="1"/>
</dbReference>
<dbReference type="InterPro" id="IPR006679">
    <property type="entry name" value="Adenine_deam"/>
</dbReference>
<dbReference type="InterPro" id="IPR026912">
    <property type="entry name" value="Adenine_deam_C"/>
</dbReference>
<dbReference type="InterPro" id="IPR006680">
    <property type="entry name" value="Amidohydro-rel"/>
</dbReference>
<dbReference type="InterPro" id="IPR011059">
    <property type="entry name" value="Metal-dep_hydrolase_composite"/>
</dbReference>
<dbReference type="InterPro" id="IPR032466">
    <property type="entry name" value="Metal_Hydrolase"/>
</dbReference>
<dbReference type="NCBIfam" id="TIGR01178">
    <property type="entry name" value="ade"/>
    <property type="match status" value="1"/>
</dbReference>
<dbReference type="PANTHER" id="PTHR11113:SF2">
    <property type="entry name" value="ADENINE DEAMINASE"/>
    <property type="match status" value="1"/>
</dbReference>
<dbReference type="PANTHER" id="PTHR11113">
    <property type="entry name" value="N-ACETYLGLUCOSAMINE-6-PHOSPHATE DEACETYLASE"/>
    <property type="match status" value="1"/>
</dbReference>
<dbReference type="Pfam" id="PF13382">
    <property type="entry name" value="Adenine_deam_C"/>
    <property type="match status" value="1"/>
</dbReference>
<dbReference type="Pfam" id="PF01979">
    <property type="entry name" value="Amidohydro_1"/>
    <property type="match status" value="1"/>
</dbReference>
<dbReference type="SUPFAM" id="SSF51338">
    <property type="entry name" value="Composite domain of metallo-dependent hydrolases"/>
    <property type="match status" value="1"/>
</dbReference>
<dbReference type="SUPFAM" id="SSF51556">
    <property type="entry name" value="Metallo-dependent hydrolases"/>
    <property type="match status" value="1"/>
</dbReference>